<dbReference type="EC" id="2.7.4.6" evidence="1"/>
<dbReference type="EMBL" id="AE017283">
    <property type="protein sequence ID" value="AAT82579.1"/>
    <property type="status" value="ALT_INIT"/>
    <property type="molecule type" value="Genomic_DNA"/>
</dbReference>
<dbReference type="RefSeq" id="WP_032496520.1">
    <property type="nucleotide sequence ID" value="NZ_CP025935.1"/>
</dbReference>
<dbReference type="SMR" id="Q6A9I7"/>
<dbReference type="EnsemblBacteria" id="AAT82579">
    <property type="protein sequence ID" value="AAT82579"/>
    <property type="gene ID" value="PPA0823"/>
</dbReference>
<dbReference type="KEGG" id="pac:PPA0823"/>
<dbReference type="PATRIC" id="fig|267747.3.peg.859"/>
<dbReference type="eggNOG" id="COG0105">
    <property type="taxonomic scope" value="Bacteria"/>
</dbReference>
<dbReference type="HOGENOM" id="CLU_060216_6_3_11"/>
<dbReference type="Proteomes" id="UP000000603">
    <property type="component" value="Chromosome"/>
</dbReference>
<dbReference type="GO" id="GO:0005737">
    <property type="term" value="C:cytoplasm"/>
    <property type="evidence" value="ECO:0007669"/>
    <property type="project" value="UniProtKB-SubCell"/>
</dbReference>
<dbReference type="GO" id="GO:0005524">
    <property type="term" value="F:ATP binding"/>
    <property type="evidence" value="ECO:0007669"/>
    <property type="project" value="UniProtKB-UniRule"/>
</dbReference>
<dbReference type="GO" id="GO:0046872">
    <property type="term" value="F:metal ion binding"/>
    <property type="evidence" value="ECO:0007669"/>
    <property type="project" value="UniProtKB-KW"/>
</dbReference>
<dbReference type="GO" id="GO:0004550">
    <property type="term" value="F:nucleoside diphosphate kinase activity"/>
    <property type="evidence" value="ECO:0007669"/>
    <property type="project" value="UniProtKB-UniRule"/>
</dbReference>
<dbReference type="GO" id="GO:0006241">
    <property type="term" value="P:CTP biosynthetic process"/>
    <property type="evidence" value="ECO:0007669"/>
    <property type="project" value="UniProtKB-UniRule"/>
</dbReference>
<dbReference type="GO" id="GO:0006183">
    <property type="term" value="P:GTP biosynthetic process"/>
    <property type="evidence" value="ECO:0007669"/>
    <property type="project" value="UniProtKB-UniRule"/>
</dbReference>
<dbReference type="GO" id="GO:0006228">
    <property type="term" value="P:UTP biosynthetic process"/>
    <property type="evidence" value="ECO:0007669"/>
    <property type="project" value="UniProtKB-UniRule"/>
</dbReference>
<dbReference type="CDD" id="cd04413">
    <property type="entry name" value="NDPk_I"/>
    <property type="match status" value="1"/>
</dbReference>
<dbReference type="FunFam" id="3.30.70.141:FF:000003">
    <property type="entry name" value="Nucleoside diphosphate kinase"/>
    <property type="match status" value="1"/>
</dbReference>
<dbReference type="Gene3D" id="3.30.70.141">
    <property type="entry name" value="Nucleoside diphosphate kinase-like domain"/>
    <property type="match status" value="1"/>
</dbReference>
<dbReference type="HAMAP" id="MF_00451">
    <property type="entry name" value="NDP_kinase"/>
    <property type="match status" value="1"/>
</dbReference>
<dbReference type="InterPro" id="IPR034907">
    <property type="entry name" value="NDK-like_dom"/>
</dbReference>
<dbReference type="InterPro" id="IPR036850">
    <property type="entry name" value="NDK-like_dom_sf"/>
</dbReference>
<dbReference type="InterPro" id="IPR001564">
    <property type="entry name" value="Nucleoside_diP_kinase"/>
</dbReference>
<dbReference type="NCBIfam" id="NF001908">
    <property type="entry name" value="PRK00668.1"/>
    <property type="match status" value="1"/>
</dbReference>
<dbReference type="PANTHER" id="PTHR11349">
    <property type="entry name" value="NUCLEOSIDE DIPHOSPHATE KINASE"/>
    <property type="match status" value="1"/>
</dbReference>
<dbReference type="Pfam" id="PF00334">
    <property type="entry name" value="NDK"/>
    <property type="match status" value="1"/>
</dbReference>
<dbReference type="PRINTS" id="PR01243">
    <property type="entry name" value="NUCDPKINASE"/>
</dbReference>
<dbReference type="SMART" id="SM00562">
    <property type="entry name" value="NDK"/>
    <property type="match status" value="1"/>
</dbReference>
<dbReference type="SUPFAM" id="SSF54919">
    <property type="entry name" value="Nucleoside diphosphate kinase, NDK"/>
    <property type="match status" value="1"/>
</dbReference>
<dbReference type="PROSITE" id="PS51374">
    <property type="entry name" value="NDPK_LIKE"/>
    <property type="match status" value="1"/>
</dbReference>
<gene>
    <name evidence="1" type="primary">ndk</name>
    <name type="ordered locus">PPA0823</name>
</gene>
<accession>Q6A9I7</accession>
<proteinExistence type="inferred from homology"/>
<feature type="chain" id="PRO_0000137020" description="Nucleoside diphosphate kinase">
    <location>
        <begin position="1"/>
        <end position="138"/>
    </location>
</feature>
<feature type="active site" description="Pros-phosphohistidine intermediate" evidence="1">
    <location>
        <position position="118"/>
    </location>
</feature>
<feature type="binding site" evidence="1">
    <location>
        <position position="12"/>
    </location>
    <ligand>
        <name>ATP</name>
        <dbReference type="ChEBI" id="CHEBI:30616"/>
    </ligand>
</feature>
<feature type="binding site" evidence="1">
    <location>
        <position position="60"/>
    </location>
    <ligand>
        <name>ATP</name>
        <dbReference type="ChEBI" id="CHEBI:30616"/>
    </ligand>
</feature>
<feature type="binding site" evidence="1">
    <location>
        <position position="88"/>
    </location>
    <ligand>
        <name>ATP</name>
        <dbReference type="ChEBI" id="CHEBI:30616"/>
    </ligand>
</feature>
<feature type="binding site" evidence="1">
    <location>
        <position position="94"/>
    </location>
    <ligand>
        <name>ATP</name>
        <dbReference type="ChEBI" id="CHEBI:30616"/>
    </ligand>
</feature>
<feature type="binding site" evidence="1">
    <location>
        <position position="105"/>
    </location>
    <ligand>
        <name>ATP</name>
        <dbReference type="ChEBI" id="CHEBI:30616"/>
    </ligand>
</feature>
<feature type="binding site" evidence="1">
    <location>
        <position position="115"/>
    </location>
    <ligand>
        <name>ATP</name>
        <dbReference type="ChEBI" id="CHEBI:30616"/>
    </ligand>
</feature>
<keyword id="KW-0067">ATP-binding</keyword>
<keyword id="KW-0963">Cytoplasm</keyword>
<keyword id="KW-0418">Kinase</keyword>
<keyword id="KW-0460">Magnesium</keyword>
<keyword id="KW-0479">Metal-binding</keyword>
<keyword id="KW-0546">Nucleotide metabolism</keyword>
<keyword id="KW-0547">Nucleotide-binding</keyword>
<keyword id="KW-0597">Phosphoprotein</keyword>
<keyword id="KW-0808">Transferase</keyword>
<name>NDK_CUTAK</name>
<protein>
    <recommendedName>
        <fullName evidence="1">Nucleoside diphosphate kinase</fullName>
        <shortName evidence="1">NDK</shortName>
        <shortName evidence="1">NDP kinase</shortName>
        <ecNumber evidence="1">2.7.4.6</ecNumber>
    </recommendedName>
    <alternativeName>
        <fullName evidence="1">Nucleoside-2-P kinase</fullName>
    </alternativeName>
</protein>
<reference key="1">
    <citation type="journal article" date="2004" name="Science">
        <title>The complete genome sequence of Propionibacterium acnes, a commensal of human skin.</title>
        <authorList>
            <person name="Brueggemann H."/>
            <person name="Henne A."/>
            <person name="Hoster F."/>
            <person name="Liesegang H."/>
            <person name="Wiezer A."/>
            <person name="Strittmatter A."/>
            <person name="Hujer S."/>
            <person name="Duerre P."/>
            <person name="Gottschalk G."/>
        </authorList>
    </citation>
    <scope>NUCLEOTIDE SEQUENCE [LARGE SCALE GENOMIC DNA]</scope>
    <source>
        <strain>DSM 16379 / KPA171202</strain>
    </source>
</reference>
<evidence type="ECO:0000255" key="1">
    <source>
        <dbReference type="HAMAP-Rule" id="MF_00451"/>
    </source>
</evidence>
<evidence type="ECO:0000305" key="2"/>
<organism>
    <name type="scientific">Cutibacterium acnes (strain DSM 16379 / KPA171202)</name>
    <name type="common">Propionibacterium acnes</name>
    <dbReference type="NCBI Taxonomy" id="267747"/>
    <lineage>
        <taxon>Bacteria</taxon>
        <taxon>Bacillati</taxon>
        <taxon>Actinomycetota</taxon>
        <taxon>Actinomycetes</taxon>
        <taxon>Propionibacteriales</taxon>
        <taxon>Propionibacteriaceae</taxon>
        <taxon>Cutibacterium</taxon>
    </lineage>
</organism>
<sequence length="138" mass="15370">MSDEERTLVLLKPDAVKRRLMGEIIGRYEAKGLTVRAMELSTIDTKIARKHYAEHVGRDYYAALEEFITSGPLVAMVLEGRRAISVVRAMNGTTDCAEALPGTIRGDFGTEKNHNLVHASDCLESAEREIGLWFPHLV</sequence>
<comment type="function">
    <text evidence="1">Major role in the synthesis of nucleoside triphosphates other than ATP. The ATP gamma phosphate is transferred to the NDP beta phosphate via a ping-pong mechanism, using a phosphorylated active-site intermediate.</text>
</comment>
<comment type="catalytic activity">
    <reaction evidence="1">
        <text>a 2'-deoxyribonucleoside 5'-diphosphate + ATP = a 2'-deoxyribonucleoside 5'-triphosphate + ADP</text>
        <dbReference type="Rhea" id="RHEA:44640"/>
        <dbReference type="ChEBI" id="CHEBI:30616"/>
        <dbReference type="ChEBI" id="CHEBI:61560"/>
        <dbReference type="ChEBI" id="CHEBI:73316"/>
        <dbReference type="ChEBI" id="CHEBI:456216"/>
        <dbReference type="EC" id="2.7.4.6"/>
    </reaction>
</comment>
<comment type="catalytic activity">
    <reaction evidence="1">
        <text>a ribonucleoside 5'-diphosphate + ATP = a ribonucleoside 5'-triphosphate + ADP</text>
        <dbReference type="Rhea" id="RHEA:18113"/>
        <dbReference type="ChEBI" id="CHEBI:30616"/>
        <dbReference type="ChEBI" id="CHEBI:57930"/>
        <dbReference type="ChEBI" id="CHEBI:61557"/>
        <dbReference type="ChEBI" id="CHEBI:456216"/>
        <dbReference type="EC" id="2.7.4.6"/>
    </reaction>
</comment>
<comment type="cofactor">
    <cofactor evidence="1">
        <name>Mg(2+)</name>
        <dbReference type="ChEBI" id="CHEBI:18420"/>
    </cofactor>
</comment>
<comment type="subunit">
    <text evidence="1">Homotetramer.</text>
</comment>
<comment type="subcellular location">
    <subcellularLocation>
        <location evidence="1">Cytoplasm</location>
    </subcellularLocation>
</comment>
<comment type="similarity">
    <text evidence="1">Belongs to the NDK family.</text>
</comment>
<comment type="sequence caution" evidence="2">
    <conflict type="erroneous initiation">
        <sequence resource="EMBL-CDS" id="AAT82579"/>
    </conflict>
</comment>